<sequence>MATNFSDIVKQGYVKMKSRKLGIYRRCWLVFRKSSSKGPQRLEKYPDEKSVCLRGCPKVTEISNVKCVTRLPKETKRQAVAIIFTDDSARTFTCDSELEAEEWYKTLSVECLGSRLNDISLGEPDLLAPGVQCEQTDRFNVFLLPCPNLDVYGECKLQITHENIYLWDIHNPRVKLVSWPLCSLRRYGRDATRFTFEAGRMCDAGEGLYTFQTQEGEQIYQRVHSATLAIAEQHKRVLLEMEKNVRLLNKGTEHYSYPCTPTTMLPRSAYWHHITGSQNIAEASSYAGEGYGAAQASSETDLLNRFILLKPKPSQGDSSEAKTPSQ</sequence>
<keyword id="KW-0597">Phosphoprotein</keyword>
<keyword id="KW-1267">Proteomics identification</keyword>
<keyword id="KW-1185">Reference proteome</keyword>
<gene>
    <name type="primary">DOK4</name>
</gene>
<dbReference type="EMBL" id="AF466369">
    <property type="protein sequence ID" value="AAL74195.1"/>
    <property type="molecule type" value="mRNA"/>
</dbReference>
<dbReference type="EMBL" id="AK001350">
    <property type="protein sequence ID" value="BAA91642.1"/>
    <property type="molecule type" value="mRNA"/>
</dbReference>
<dbReference type="EMBL" id="AC004382">
    <property type="protein sequence ID" value="AAC24310.1"/>
    <property type="status" value="ALT_SEQ"/>
    <property type="molecule type" value="Genomic_DNA"/>
</dbReference>
<dbReference type="EMBL" id="BC001540">
    <property type="protein sequence ID" value="AAH01540.1"/>
    <property type="molecule type" value="mRNA"/>
</dbReference>
<dbReference type="EMBL" id="BC003541">
    <property type="protein sequence ID" value="AAH03541.1"/>
    <property type="molecule type" value="mRNA"/>
</dbReference>
<dbReference type="CCDS" id="CCDS10783.1"/>
<dbReference type="RefSeq" id="NP_001356548.1">
    <property type="nucleotide sequence ID" value="NM_001369619.1"/>
</dbReference>
<dbReference type="RefSeq" id="NP_001356550.1">
    <property type="nucleotide sequence ID" value="NM_001369621.1"/>
</dbReference>
<dbReference type="RefSeq" id="NP_001381586.1">
    <property type="nucleotide sequence ID" value="NM_001394657.1"/>
</dbReference>
<dbReference type="RefSeq" id="NP_001381587.1">
    <property type="nucleotide sequence ID" value="NM_001394658.1"/>
</dbReference>
<dbReference type="RefSeq" id="NP_001381588.1">
    <property type="nucleotide sequence ID" value="NM_001394659.1"/>
</dbReference>
<dbReference type="RefSeq" id="NP_001381589.1">
    <property type="nucleotide sequence ID" value="NM_001394660.1"/>
</dbReference>
<dbReference type="RefSeq" id="NP_001381590.1">
    <property type="nucleotide sequence ID" value="NM_001394661.1"/>
</dbReference>
<dbReference type="RefSeq" id="NP_060580.2">
    <property type="nucleotide sequence ID" value="NM_018110.3"/>
</dbReference>
<dbReference type="RefSeq" id="XP_005256100.1">
    <property type="nucleotide sequence ID" value="XM_005256043.2"/>
</dbReference>
<dbReference type="RefSeq" id="XP_047290317.1">
    <property type="nucleotide sequence ID" value="XM_047434361.1"/>
</dbReference>
<dbReference type="RefSeq" id="XP_054169438.1">
    <property type="nucleotide sequence ID" value="XM_054313463.1"/>
</dbReference>
<dbReference type="SMR" id="Q8TEW6"/>
<dbReference type="BioGRID" id="120837">
    <property type="interactions" value="76"/>
</dbReference>
<dbReference type="FunCoup" id="Q8TEW6">
    <property type="interactions" value="880"/>
</dbReference>
<dbReference type="IntAct" id="Q8TEW6">
    <property type="interactions" value="56"/>
</dbReference>
<dbReference type="MINT" id="Q8TEW6"/>
<dbReference type="STRING" id="9606.ENSP00000455566"/>
<dbReference type="iPTMnet" id="Q8TEW6"/>
<dbReference type="PhosphoSitePlus" id="Q8TEW6"/>
<dbReference type="SwissPalm" id="Q8TEW6"/>
<dbReference type="BioMuta" id="DOK4"/>
<dbReference type="DMDM" id="84029600"/>
<dbReference type="jPOST" id="Q8TEW6"/>
<dbReference type="MassIVE" id="Q8TEW6"/>
<dbReference type="PaxDb" id="9606-ENSP00000344277"/>
<dbReference type="PeptideAtlas" id="Q8TEW6"/>
<dbReference type="ProteomicsDB" id="74516"/>
<dbReference type="Antibodypedia" id="28881">
    <property type="antibodies" value="241 antibodies from 29 providers"/>
</dbReference>
<dbReference type="DNASU" id="55715"/>
<dbReference type="Ensembl" id="ENST00000340099.10">
    <property type="protein sequence ID" value="ENSP00000344277.4"/>
    <property type="gene ID" value="ENSG00000125170.11"/>
</dbReference>
<dbReference type="Ensembl" id="ENST00000569548.5">
    <property type="protein sequence ID" value="ENSP00000455128.1"/>
    <property type="gene ID" value="ENSG00000125170.11"/>
</dbReference>
<dbReference type="GeneID" id="55715"/>
<dbReference type="KEGG" id="hsa:55715"/>
<dbReference type="MANE-Select" id="ENST00000340099.10">
    <property type="protein sequence ID" value="ENSP00000344277.4"/>
    <property type="RefSeq nucleotide sequence ID" value="NM_018110.5"/>
    <property type="RefSeq protein sequence ID" value="NP_060580.2"/>
</dbReference>
<dbReference type="UCSC" id="uc002elv.5">
    <property type="organism name" value="human"/>
</dbReference>
<dbReference type="AGR" id="HGNC:19868"/>
<dbReference type="CTD" id="55715"/>
<dbReference type="DisGeNET" id="55715"/>
<dbReference type="GeneCards" id="DOK4"/>
<dbReference type="HGNC" id="HGNC:19868">
    <property type="gene designation" value="DOK4"/>
</dbReference>
<dbReference type="HPA" id="ENSG00000125170">
    <property type="expression patterns" value="Low tissue specificity"/>
</dbReference>
<dbReference type="MIM" id="608333">
    <property type="type" value="gene"/>
</dbReference>
<dbReference type="neXtProt" id="NX_Q8TEW6"/>
<dbReference type="OpenTargets" id="ENSG00000125170"/>
<dbReference type="PharmGKB" id="PA134892921"/>
<dbReference type="VEuPathDB" id="HostDB:ENSG00000125170"/>
<dbReference type="eggNOG" id="KOG4047">
    <property type="taxonomic scope" value="Eukaryota"/>
</dbReference>
<dbReference type="GeneTree" id="ENSGT00940000160143"/>
<dbReference type="HOGENOM" id="CLU_057256_1_0_1"/>
<dbReference type="InParanoid" id="Q8TEW6"/>
<dbReference type="OMA" id="KMLSIEC"/>
<dbReference type="OrthoDB" id="6279276at2759"/>
<dbReference type="PAN-GO" id="Q8TEW6">
    <property type="GO annotations" value="3 GO annotations based on evolutionary models"/>
</dbReference>
<dbReference type="PhylomeDB" id="Q8TEW6"/>
<dbReference type="TreeFam" id="TF324994"/>
<dbReference type="PathwayCommons" id="Q8TEW6"/>
<dbReference type="Reactome" id="R-HSA-8853659">
    <property type="pathway name" value="RET signaling"/>
</dbReference>
<dbReference type="SignaLink" id="Q8TEW6"/>
<dbReference type="SIGNOR" id="Q8TEW6"/>
<dbReference type="BioGRID-ORCS" id="55715">
    <property type="hits" value="7 hits in 1152 CRISPR screens"/>
</dbReference>
<dbReference type="ChiTaRS" id="DOK4">
    <property type="organism name" value="human"/>
</dbReference>
<dbReference type="GeneWiki" id="DOK4"/>
<dbReference type="GenomeRNAi" id="55715"/>
<dbReference type="Pharos" id="Q8TEW6">
    <property type="development level" value="Tbio"/>
</dbReference>
<dbReference type="PRO" id="PR:Q8TEW6"/>
<dbReference type="Proteomes" id="UP000005640">
    <property type="component" value="Chromosome 16"/>
</dbReference>
<dbReference type="RNAct" id="Q8TEW6">
    <property type="molecule type" value="protein"/>
</dbReference>
<dbReference type="Bgee" id="ENSG00000125170">
    <property type="expression patterns" value="Expressed in mucosa of transverse colon and 178 other cell types or tissues"/>
</dbReference>
<dbReference type="ExpressionAtlas" id="Q8TEW6">
    <property type="expression patterns" value="baseline and differential"/>
</dbReference>
<dbReference type="GO" id="GO:0005737">
    <property type="term" value="C:cytoplasm"/>
    <property type="evidence" value="ECO:0000318"/>
    <property type="project" value="GO_Central"/>
</dbReference>
<dbReference type="GO" id="GO:0005829">
    <property type="term" value="C:cytosol"/>
    <property type="evidence" value="ECO:0000304"/>
    <property type="project" value="Reactome"/>
</dbReference>
<dbReference type="GO" id="GO:0007169">
    <property type="term" value="P:cell surface receptor protein tyrosine kinase signaling pathway"/>
    <property type="evidence" value="ECO:0000318"/>
    <property type="project" value="GO_Central"/>
</dbReference>
<dbReference type="GO" id="GO:0007399">
    <property type="term" value="P:nervous system development"/>
    <property type="evidence" value="ECO:0007669"/>
    <property type="project" value="Ensembl"/>
</dbReference>
<dbReference type="GO" id="GO:0043410">
    <property type="term" value="P:positive regulation of MAPK cascade"/>
    <property type="evidence" value="ECO:0007669"/>
    <property type="project" value="Ensembl"/>
</dbReference>
<dbReference type="CDD" id="cd14678">
    <property type="entry name" value="PH_DOK4_DOK5_DOK6"/>
    <property type="match status" value="1"/>
</dbReference>
<dbReference type="CDD" id="cd13164">
    <property type="entry name" value="PTB_DOK4_DOK5_DOK6"/>
    <property type="match status" value="1"/>
</dbReference>
<dbReference type="FunFam" id="2.30.29.30:FF:000110">
    <property type="entry name" value="Docking protein 4"/>
    <property type="match status" value="1"/>
</dbReference>
<dbReference type="FunFam" id="2.30.29.30:FF:000082">
    <property type="entry name" value="Docking protein 5"/>
    <property type="match status" value="1"/>
</dbReference>
<dbReference type="Gene3D" id="2.30.29.30">
    <property type="entry name" value="Pleckstrin-homology domain (PH domain)/Phosphotyrosine-binding domain (PTB)"/>
    <property type="match status" value="2"/>
</dbReference>
<dbReference type="InterPro" id="IPR050996">
    <property type="entry name" value="Docking_Protein_DOK"/>
</dbReference>
<dbReference type="InterPro" id="IPR037816">
    <property type="entry name" value="DOK4/5/6_PH"/>
</dbReference>
<dbReference type="InterPro" id="IPR002404">
    <property type="entry name" value="IRS_PTB"/>
</dbReference>
<dbReference type="InterPro" id="IPR011993">
    <property type="entry name" value="PH-like_dom_sf"/>
</dbReference>
<dbReference type="InterPro" id="IPR001849">
    <property type="entry name" value="PH_domain"/>
</dbReference>
<dbReference type="PANTHER" id="PTHR21258:SF44">
    <property type="entry name" value="DOCKING PROTEIN 4"/>
    <property type="match status" value="1"/>
</dbReference>
<dbReference type="PANTHER" id="PTHR21258">
    <property type="entry name" value="DOCKING PROTEIN RELATED"/>
    <property type="match status" value="1"/>
</dbReference>
<dbReference type="Pfam" id="PF02174">
    <property type="entry name" value="IRS"/>
    <property type="match status" value="1"/>
</dbReference>
<dbReference type="Pfam" id="PF00169">
    <property type="entry name" value="PH"/>
    <property type="match status" value="1"/>
</dbReference>
<dbReference type="SMART" id="SM01244">
    <property type="entry name" value="IRS"/>
    <property type="match status" value="1"/>
</dbReference>
<dbReference type="SMART" id="SM00233">
    <property type="entry name" value="PH"/>
    <property type="match status" value="1"/>
</dbReference>
<dbReference type="SMART" id="SM00310">
    <property type="entry name" value="PTBI"/>
    <property type="match status" value="1"/>
</dbReference>
<dbReference type="SUPFAM" id="SSF50729">
    <property type="entry name" value="PH domain-like"/>
    <property type="match status" value="2"/>
</dbReference>
<dbReference type="PROSITE" id="PS51064">
    <property type="entry name" value="IRS_PTB"/>
    <property type="match status" value="1"/>
</dbReference>
<reference key="1">
    <citation type="journal article" date="2003" name="Genes Immun.">
        <title>DOK4 and DOK5: new Dok-related genes expressed in human T cells.</title>
        <authorList>
            <person name="Favre C."/>
            <person name="Gerard A."/>
            <person name="Clauzier E."/>
            <person name="Pontarotti P."/>
            <person name="Olive D."/>
            <person name="Nunes J.A."/>
        </authorList>
    </citation>
    <scope>NUCLEOTIDE SEQUENCE [MRNA]</scope>
    <scope>TISSUE SPECIFICITY</scope>
    <source>
        <tissue>T-cell</tissue>
    </source>
</reference>
<reference key="2">
    <citation type="journal article" date="2003" name="J. Biol. Chem.">
        <title>Two new substrates in insulin signaling, IRS5/DOK4 and IRS6/DOK5.</title>
        <authorList>
            <person name="Cai D."/>
            <person name="Dhe-Paganon S."/>
            <person name="Melendez P.A."/>
            <person name="Lee J."/>
            <person name="Shoelson S.E."/>
        </authorList>
    </citation>
    <scope>NUCLEOTIDE SEQUENCE [MRNA]</scope>
    <scope>TISSUE SPECIFICITY</scope>
    <scope>PHOSPHORYLATION AT TYROSINE RESIDUES</scope>
    <source>
        <tissue>Skeletal muscle</tissue>
    </source>
</reference>
<reference key="3">
    <citation type="journal article" date="2004" name="Nat. Genet.">
        <title>Complete sequencing and characterization of 21,243 full-length human cDNAs.</title>
        <authorList>
            <person name="Ota T."/>
            <person name="Suzuki Y."/>
            <person name="Nishikawa T."/>
            <person name="Otsuki T."/>
            <person name="Sugiyama T."/>
            <person name="Irie R."/>
            <person name="Wakamatsu A."/>
            <person name="Hayashi K."/>
            <person name="Sato H."/>
            <person name="Nagai K."/>
            <person name="Kimura K."/>
            <person name="Makita H."/>
            <person name="Sekine M."/>
            <person name="Obayashi M."/>
            <person name="Nishi T."/>
            <person name="Shibahara T."/>
            <person name="Tanaka T."/>
            <person name="Ishii S."/>
            <person name="Yamamoto J."/>
            <person name="Saito K."/>
            <person name="Kawai Y."/>
            <person name="Isono Y."/>
            <person name="Nakamura Y."/>
            <person name="Nagahari K."/>
            <person name="Murakami K."/>
            <person name="Yasuda T."/>
            <person name="Iwayanagi T."/>
            <person name="Wagatsuma M."/>
            <person name="Shiratori A."/>
            <person name="Sudo H."/>
            <person name="Hosoiri T."/>
            <person name="Kaku Y."/>
            <person name="Kodaira H."/>
            <person name="Kondo H."/>
            <person name="Sugawara M."/>
            <person name="Takahashi M."/>
            <person name="Kanda K."/>
            <person name="Yokoi T."/>
            <person name="Furuya T."/>
            <person name="Kikkawa E."/>
            <person name="Omura Y."/>
            <person name="Abe K."/>
            <person name="Kamihara K."/>
            <person name="Katsuta N."/>
            <person name="Sato K."/>
            <person name="Tanikawa M."/>
            <person name="Yamazaki M."/>
            <person name="Ninomiya K."/>
            <person name="Ishibashi T."/>
            <person name="Yamashita H."/>
            <person name="Murakawa K."/>
            <person name="Fujimori K."/>
            <person name="Tanai H."/>
            <person name="Kimata M."/>
            <person name="Watanabe M."/>
            <person name="Hiraoka S."/>
            <person name="Chiba Y."/>
            <person name="Ishida S."/>
            <person name="Ono Y."/>
            <person name="Takiguchi S."/>
            <person name="Watanabe S."/>
            <person name="Yosida M."/>
            <person name="Hotuta T."/>
            <person name="Kusano J."/>
            <person name="Kanehori K."/>
            <person name="Takahashi-Fujii A."/>
            <person name="Hara H."/>
            <person name="Tanase T.-O."/>
            <person name="Nomura Y."/>
            <person name="Togiya S."/>
            <person name="Komai F."/>
            <person name="Hara R."/>
            <person name="Takeuchi K."/>
            <person name="Arita M."/>
            <person name="Imose N."/>
            <person name="Musashino K."/>
            <person name="Yuuki H."/>
            <person name="Oshima A."/>
            <person name="Sasaki N."/>
            <person name="Aotsuka S."/>
            <person name="Yoshikawa Y."/>
            <person name="Matsunawa H."/>
            <person name="Ichihara T."/>
            <person name="Shiohata N."/>
            <person name="Sano S."/>
            <person name="Moriya S."/>
            <person name="Momiyama H."/>
            <person name="Satoh N."/>
            <person name="Takami S."/>
            <person name="Terashima Y."/>
            <person name="Suzuki O."/>
            <person name="Nakagawa S."/>
            <person name="Senoh A."/>
            <person name="Mizoguchi H."/>
            <person name="Goto Y."/>
            <person name="Shimizu F."/>
            <person name="Wakebe H."/>
            <person name="Hishigaki H."/>
            <person name="Watanabe T."/>
            <person name="Sugiyama A."/>
            <person name="Takemoto M."/>
            <person name="Kawakami B."/>
            <person name="Yamazaki M."/>
            <person name="Watanabe K."/>
            <person name="Kumagai A."/>
            <person name="Itakura S."/>
            <person name="Fukuzumi Y."/>
            <person name="Fujimori Y."/>
            <person name="Komiyama M."/>
            <person name="Tashiro H."/>
            <person name="Tanigami A."/>
            <person name="Fujiwara T."/>
            <person name="Ono T."/>
            <person name="Yamada K."/>
            <person name="Fujii Y."/>
            <person name="Ozaki K."/>
            <person name="Hirao M."/>
            <person name="Ohmori Y."/>
            <person name="Kawabata A."/>
            <person name="Hikiji T."/>
            <person name="Kobatake N."/>
            <person name="Inagaki H."/>
            <person name="Ikema Y."/>
            <person name="Okamoto S."/>
            <person name="Okitani R."/>
            <person name="Kawakami T."/>
            <person name="Noguchi S."/>
            <person name="Itoh T."/>
            <person name="Shigeta K."/>
            <person name="Senba T."/>
            <person name="Matsumura K."/>
            <person name="Nakajima Y."/>
            <person name="Mizuno T."/>
            <person name="Morinaga M."/>
            <person name="Sasaki M."/>
            <person name="Togashi T."/>
            <person name="Oyama M."/>
            <person name="Hata H."/>
            <person name="Watanabe M."/>
            <person name="Komatsu T."/>
            <person name="Mizushima-Sugano J."/>
            <person name="Satoh T."/>
            <person name="Shirai Y."/>
            <person name="Takahashi Y."/>
            <person name="Nakagawa K."/>
            <person name="Okumura K."/>
            <person name="Nagase T."/>
            <person name="Nomura N."/>
            <person name="Kikuchi H."/>
            <person name="Masuho Y."/>
            <person name="Yamashita R."/>
            <person name="Nakai K."/>
            <person name="Yada T."/>
            <person name="Nakamura Y."/>
            <person name="Ohara O."/>
            <person name="Isogai T."/>
            <person name="Sugano S."/>
        </authorList>
    </citation>
    <scope>NUCLEOTIDE SEQUENCE [LARGE SCALE MRNA]</scope>
</reference>
<reference key="4">
    <citation type="journal article" date="1999" name="Genomics">
        <title>Genome duplications and other features in 12 Mb of DNA sequence from human chromosome 16p and 16q.</title>
        <authorList>
            <person name="Loftus B.J."/>
            <person name="Kim U.-J."/>
            <person name="Sneddon V.P."/>
            <person name="Kalush F."/>
            <person name="Brandon R."/>
            <person name="Fuhrmann J."/>
            <person name="Mason T."/>
            <person name="Crosby M.L."/>
            <person name="Barnstead M."/>
            <person name="Cronin L."/>
            <person name="Mays A.D."/>
            <person name="Cao Y."/>
            <person name="Xu R.X."/>
            <person name="Kang H.-L."/>
            <person name="Mitchell S."/>
            <person name="Eichler E.E."/>
            <person name="Harris P.C."/>
            <person name="Venter J.C."/>
            <person name="Adams M.D."/>
        </authorList>
    </citation>
    <scope>NUCLEOTIDE SEQUENCE [LARGE SCALE GENOMIC DNA]</scope>
</reference>
<reference key="5">
    <citation type="journal article" date="2004" name="Genome Res.">
        <title>The status, quality, and expansion of the NIH full-length cDNA project: the Mammalian Gene Collection (MGC).</title>
        <authorList>
            <consortium name="The MGC Project Team"/>
        </authorList>
    </citation>
    <scope>NUCLEOTIDE SEQUENCE [LARGE SCALE MRNA]</scope>
    <source>
        <tissue>Colon</tissue>
        <tissue>Pancreas</tissue>
    </source>
</reference>
<evidence type="ECO:0000250" key="1"/>
<evidence type="ECO:0000255" key="2">
    <source>
        <dbReference type="PROSITE-ProRule" id="PRU00389"/>
    </source>
</evidence>
<evidence type="ECO:0000269" key="3">
    <source>
    </source>
</evidence>
<evidence type="ECO:0000269" key="4">
    <source>
    </source>
</evidence>
<evidence type="ECO:0000305" key="5"/>
<accession>Q8TEW6</accession>
<accession>O75209</accession>
<accession>Q9BTP2</accession>
<accession>Q9NVV3</accession>
<protein>
    <recommendedName>
        <fullName>Docking protein 4</fullName>
    </recommendedName>
    <alternativeName>
        <fullName>Downstream of tyrosine kinase 4</fullName>
    </alternativeName>
    <alternativeName>
        <fullName>Insulin receptor substrate 5</fullName>
        <shortName>IRS-5</shortName>
        <shortName>IRS5</shortName>
    </alternativeName>
</protein>
<organism>
    <name type="scientific">Homo sapiens</name>
    <name type="common">Human</name>
    <dbReference type="NCBI Taxonomy" id="9606"/>
    <lineage>
        <taxon>Eukaryota</taxon>
        <taxon>Metazoa</taxon>
        <taxon>Chordata</taxon>
        <taxon>Craniata</taxon>
        <taxon>Vertebrata</taxon>
        <taxon>Euteleostomi</taxon>
        <taxon>Mammalia</taxon>
        <taxon>Eutheria</taxon>
        <taxon>Euarchontoglires</taxon>
        <taxon>Primates</taxon>
        <taxon>Haplorrhini</taxon>
        <taxon>Catarrhini</taxon>
        <taxon>Hominidae</taxon>
        <taxon>Homo</taxon>
    </lineage>
</organism>
<comment type="function">
    <text evidence="1">DOK proteins are enzymatically inert adaptor or scaffolding proteins. They provide a docking platform for the assembly of multimolecular signaling complexes. DOK4 functions in RET-mediated neurite outgrowth and plays a positive role in activation of the MAP kinase pathway (By similarity). Putative link with downstream effectors of RET in neuronal differentiation. May be involved in the regulation of the immune response induced by T-cells.</text>
</comment>
<comment type="subunit">
    <text evidence="1">Interacts with RET and TEK/TIE2. Interaction with RET is mediated through the PTB domain and requires phosphorylation of RET 'Tyr-1062' (By similarity).</text>
</comment>
<comment type="interaction">
    <interactant intactId="EBI-6918542">
        <id>Q8TEW6</id>
    </interactant>
    <interactant intactId="EBI-1573056">
        <id>Q9BSQ5</id>
        <label>CCM2</label>
    </interactant>
    <organismsDiffer>false</organismsDiffer>
    <experiments>3</experiments>
</comment>
<comment type="interaction">
    <interactant intactId="EBI-6918542">
        <id>Q8TEW6</id>
    </interactant>
    <interactant intactId="EBI-742054">
        <id>Q96D03</id>
        <label>DDIT4L</label>
    </interactant>
    <organismsDiffer>false</organismsDiffer>
    <experiments>3</experiments>
</comment>
<comment type="interaction">
    <interactant intactId="EBI-6918542">
        <id>Q8TEW6</id>
    </interactant>
    <interactant intactId="EBI-10694655">
        <id>Q7L591-3</id>
        <label>DOK3</label>
    </interactant>
    <organismsDiffer>false</organismsDiffer>
    <experiments>3</experiments>
</comment>
<comment type="interaction">
    <interactant intactId="EBI-6918542">
        <id>Q8TEW6</id>
    </interactant>
    <interactant intactId="EBI-641062">
        <id>P04626</id>
        <label>ERBB2</label>
    </interactant>
    <organismsDiffer>false</organismsDiffer>
    <experiments>2</experiments>
</comment>
<comment type="interaction">
    <interactant intactId="EBI-6918542">
        <id>Q8TEW6</id>
    </interactant>
    <interactant intactId="EBI-6509505">
        <id>Q0VD86</id>
        <label>INCA1</label>
    </interactant>
    <organismsDiffer>false</organismsDiffer>
    <experiments>3</experiments>
</comment>
<comment type="interaction">
    <interactant intactId="EBI-6918542">
        <id>Q8TEW6</id>
    </interactant>
    <interactant intactId="EBI-2624570">
        <id>P35372</id>
        <label>OPRM1</label>
    </interactant>
    <organismsDiffer>false</organismsDiffer>
    <experiments>4</experiments>
</comment>
<comment type="interaction">
    <interactant intactId="EBI-6918542">
        <id>Q8TEW6</id>
    </interactant>
    <interactant intactId="EBI-2683132">
        <id>Q06710</id>
        <label>PAX8</label>
    </interactant>
    <organismsDiffer>false</organismsDiffer>
    <experiments>3</experiments>
</comment>
<comment type="interaction">
    <interactant intactId="EBI-6918542">
        <id>Q8TEW6</id>
    </interactant>
    <interactant intactId="EBI-357275">
        <id>Q99471</id>
        <label>PFDN5</label>
    </interactant>
    <organismsDiffer>false</organismsDiffer>
    <experiments>3</experiments>
</comment>
<comment type="tissue specificity">
    <text evidence="3 4">Widely expressed. High expression in skeletal muscle, heart, kidney and liver. Weaker expression in spleen, lung and small intestine, brain, heart and. Expressed in both resting and activated peripheral blood T-cells.</text>
</comment>
<comment type="domain">
    <text evidence="1">PTB domain mediates receptor interaction.</text>
</comment>
<comment type="PTM">
    <text evidence="4">Phosphorylated on tyrosine residues in response to insulin, IGF1 or RET stimulation.</text>
</comment>
<comment type="similarity">
    <text evidence="5">Belongs to the DOK family. Type B subfamily.</text>
</comment>
<comment type="sequence caution" evidence="5">
    <conflict type="erroneous gene model prediction">
        <sequence resource="EMBL-CDS" id="AAC24310"/>
    </conflict>
</comment>
<proteinExistence type="evidence at protein level"/>
<feature type="chain" id="PRO_0000187274" description="Docking protein 4">
    <location>
        <begin position="1"/>
        <end position="326"/>
    </location>
</feature>
<feature type="domain" description="PH">
    <location>
        <begin position="7"/>
        <end position="112"/>
    </location>
</feature>
<feature type="domain" description="IRS-type PTB" evidence="2">
    <location>
        <begin position="132"/>
        <end position="237"/>
    </location>
</feature>
<feature type="short sequence motif" description="DKFBH motif">
    <location>
        <begin position="265"/>
        <end position="275"/>
    </location>
</feature>
<feature type="sequence conflict" description="In Ref. 2; no nucleotide entry and 3; BAA91642." evidence="5" ref="2 3">
    <original>N</original>
    <variation>S</variation>
    <location>
        <position position="64"/>
    </location>
</feature>
<feature type="sequence conflict" description="In Ref. 1; AAL74195." evidence="5" ref="1">
    <original>T</original>
    <variation>A</variation>
    <location>
        <position position="75"/>
    </location>
</feature>
<name>DOK4_HUMAN</name>